<accession>Q8CTV0</accession>
<sequence>MIAIIDYGLGNISNVTRAIQHLGYDVILTCNDKDVQKAEAIVLPGVGHFQDAMHSIEEKSIKDMLKNIHDKPVIGICLGMQLLFQHSAEGDVSGLELVPGNIVPIQSSHPIPHLGWNELKSTHPLLQSDVYFVHSYQAEMSEYVVAYADYGTKIPGVIQYRNYIGIQFHPEKSGTYGLEILNQALKGGFIND</sequence>
<name>HIS5_STAES</name>
<keyword id="KW-0028">Amino-acid biosynthesis</keyword>
<keyword id="KW-0963">Cytoplasm</keyword>
<keyword id="KW-0315">Glutamine amidotransferase</keyword>
<keyword id="KW-0368">Histidine biosynthesis</keyword>
<keyword id="KW-0378">Hydrolase</keyword>
<keyword id="KW-0456">Lyase</keyword>
<feature type="chain" id="PRO_0000152428" description="Imidazole glycerol phosphate synthase subunit HisH">
    <location>
        <begin position="1"/>
        <end position="192"/>
    </location>
</feature>
<feature type="domain" description="Glutamine amidotransferase type-1" evidence="1">
    <location>
        <begin position="1"/>
        <end position="192"/>
    </location>
</feature>
<feature type="active site" description="Nucleophile" evidence="1">
    <location>
        <position position="77"/>
    </location>
</feature>
<feature type="active site" evidence="1">
    <location>
        <position position="169"/>
    </location>
</feature>
<feature type="active site" evidence="1">
    <location>
        <position position="171"/>
    </location>
</feature>
<evidence type="ECO:0000255" key="1">
    <source>
        <dbReference type="HAMAP-Rule" id="MF_00278"/>
    </source>
</evidence>
<proteinExistence type="inferred from homology"/>
<dbReference type="EC" id="4.3.2.10" evidence="1"/>
<dbReference type="EC" id="3.5.1.2" evidence="1"/>
<dbReference type="EMBL" id="AE015929">
    <property type="protein sequence ID" value="AAO03871.1"/>
    <property type="molecule type" value="Genomic_DNA"/>
</dbReference>
<dbReference type="RefSeq" id="NP_763829.1">
    <property type="nucleotide sequence ID" value="NC_004461.1"/>
</dbReference>
<dbReference type="RefSeq" id="WP_001829439.1">
    <property type="nucleotide sequence ID" value="NZ_WBME01000037.1"/>
</dbReference>
<dbReference type="SMR" id="Q8CTV0"/>
<dbReference type="GeneID" id="50017668"/>
<dbReference type="KEGG" id="sep:SE_0274"/>
<dbReference type="PATRIC" id="fig|176280.10.peg.252"/>
<dbReference type="eggNOG" id="COG0118">
    <property type="taxonomic scope" value="Bacteria"/>
</dbReference>
<dbReference type="HOGENOM" id="CLU_071837_2_2_9"/>
<dbReference type="OrthoDB" id="9807137at2"/>
<dbReference type="UniPathway" id="UPA00031">
    <property type="reaction ID" value="UER00010"/>
</dbReference>
<dbReference type="Proteomes" id="UP000001411">
    <property type="component" value="Chromosome"/>
</dbReference>
<dbReference type="GO" id="GO:0005737">
    <property type="term" value="C:cytoplasm"/>
    <property type="evidence" value="ECO:0007669"/>
    <property type="project" value="UniProtKB-SubCell"/>
</dbReference>
<dbReference type="GO" id="GO:0004359">
    <property type="term" value="F:glutaminase activity"/>
    <property type="evidence" value="ECO:0007669"/>
    <property type="project" value="UniProtKB-EC"/>
</dbReference>
<dbReference type="GO" id="GO:0000107">
    <property type="term" value="F:imidazoleglycerol-phosphate synthase activity"/>
    <property type="evidence" value="ECO:0007669"/>
    <property type="project" value="UniProtKB-UniRule"/>
</dbReference>
<dbReference type="GO" id="GO:0016829">
    <property type="term" value="F:lyase activity"/>
    <property type="evidence" value="ECO:0007669"/>
    <property type="project" value="UniProtKB-KW"/>
</dbReference>
<dbReference type="GO" id="GO:0000105">
    <property type="term" value="P:L-histidine biosynthetic process"/>
    <property type="evidence" value="ECO:0007669"/>
    <property type="project" value="UniProtKB-UniRule"/>
</dbReference>
<dbReference type="CDD" id="cd01748">
    <property type="entry name" value="GATase1_IGP_Synthase"/>
    <property type="match status" value="1"/>
</dbReference>
<dbReference type="Gene3D" id="3.40.50.880">
    <property type="match status" value="1"/>
</dbReference>
<dbReference type="HAMAP" id="MF_00278">
    <property type="entry name" value="HisH"/>
    <property type="match status" value="1"/>
</dbReference>
<dbReference type="InterPro" id="IPR029062">
    <property type="entry name" value="Class_I_gatase-like"/>
</dbReference>
<dbReference type="InterPro" id="IPR017926">
    <property type="entry name" value="GATASE"/>
</dbReference>
<dbReference type="InterPro" id="IPR010139">
    <property type="entry name" value="Imidazole-glycPsynth_HisH"/>
</dbReference>
<dbReference type="NCBIfam" id="TIGR01855">
    <property type="entry name" value="IMP_synth_hisH"/>
    <property type="match status" value="1"/>
</dbReference>
<dbReference type="PANTHER" id="PTHR42701">
    <property type="entry name" value="IMIDAZOLE GLYCEROL PHOSPHATE SYNTHASE SUBUNIT HISH"/>
    <property type="match status" value="1"/>
</dbReference>
<dbReference type="PANTHER" id="PTHR42701:SF1">
    <property type="entry name" value="IMIDAZOLE GLYCEROL PHOSPHATE SYNTHASE SUBUNIT HISH"/>
    <property type="match status" value="1"/>
</dbReference>
<dbReference type="Pfam" id="PF00117">
    <property type="entry name" value="GATase"/>
    <property type="match status" value="1"/>
</dbReference>
<dbReference type="PIRSF" id="PIRSF000495">
    <property type="entry name" value="Amidotransf_hisH"/>
    <property type="match status" value="1"/>
</dbReference>
<dbReference type="SUPFAM" id="SSF52317">
    <property type="entry name" value="Class I glutamine amidotransferase-like"/>
    <property type="match status" value="1"/>
</dbReference>
<dbReference type="PROSITE" id="PS51273">
    <property type="entry name" value="GATASE_TYPE_1"/>
    <property type="match status" value="1"/>
</dbReference>
<comment type="function">
    <text evidence="1">IGPS catalyzes the conversion of PRFAR and glutamine to IGP, AICAR and glutamate. The HisH subunit catalyzes the hydrolysis of glutamine to glutamate and ammonia as part of the synthesis of IGP and AICAR. The resulting ammonia molecule is channeled to the active site of HisF.</text>
</comment>
<comment type="catalytic activity">
    <reaction evidence="1">
        <text>5-[(5-phospho-1-deoxy-D-ribulos-1-ylimino)methylamino]-1-(5-phospho-beta-D-ribosyl)imidazole-4-carboxamide + L-glutamine = D-erythro-1-(imidazol-4-yl)glycerol 3-phosphate + 5-amino-1-(5-phospho-beta-D-ribosyl)imidazole-4-carboxamide + L-glutamate + H(+)</text>
        <dbReference type="Rhea" id="RHEA:24793"/>
        <dbReference type="ChEBI" id="CHEBI:15378"/>
        <dbReference type="ChEBI" id="CHEBI:29985"/>
        <dbReference type="ChEBI" id="CHEBI:58278"/>
        <dbReference type="ChEBI" id="CHEBI:58359"/>
        <dbReference type="ChEBI" id="CHEBI:58475"/>
        <dbReference type="ChEBI" id="CHEBI:58525"/>
        <dbReference type="EC" id="4.3.2.10"/>
    </reaction>
</comment>
<comment type="catalytic activity">
    <reaction evidence="1">
        <text>L-glutamine + H2O = L-glutamate + NH4(+)</text>
        <dbReference type="Rhea" id="RHEA:15889"/>
        <dbReference type="ChEBI" id="CHEBI:15377"/>
        <dbReference type="ChEBI" id="CHEBI:28938"/>
        <dbReference type="ChEBI" id="CHEBI:29985"/>
        <dbReference type="ChEBI" id="CHEBI:58359"/>
        <dbReference type="EC" id="3.5.1.2"/>
    </reaction>
</comment>
<comment type="pathway">
    <text evidence="1">Amino-acid biosynthesis; L-histidine biosynthesis; L-histidine from 5-phospho-alpha-D-ribose 1-diphosphate: step 5/9.</text>
</comment>
<comment type="subunit">
    <text evidence="1">Heterodimer of HisH and HisF.</text>
</comment>
<comment type="subcellular location">
    <subcellularLocation>
        <location evidence="1">Cytoplasm</location>
    </subcellularLocation>
</comment>
<protein>
    <recommendedName>
        <fullName evidence="1">Imidazole glycerol phosphate synthase subunit HisH</fullName>
        <ecNumber evidence="1">4.3.2.10</ecNumber>
    </recommendedName>
    <alternativeName>
        <fullName evidence="1">IGP synthase glutaminase subunit</fullName>
        <ecNumber evidence="1">3.5.1.2</ecNumber>
    </alternativeName>
    <alternativeName>
        <fullName evidence="1">IGP synthase subunit HisH</fullName>
    </alternativeName>
    <alternativeName>
        <fullName evidence="1">ImGP synthase subunit HisH</fullName>
        <shortName evidence="1">IGPS subunit HisH</shortName>
    </alternativeName>
</protein>
<reference key="1">
    <citation type="journal article" date="2003" name="Mol. Microbiol.">
        <title>Genome-based analysis of virulence genes in a non-biofilm-forming Staphylococcus epidermidis strain (ATCC 12228).</title>
        <authorList>
            <person name="Zhang Y.-Q."/>
            <person name="Ren S.-X."/>
            <person name="Li H.-L."/>
            <person name="Wang Y.-X."/>
            <person name="Fu G."/>
            <person name="Yang J."/>
            <person name="Qin Z.-Q."/>
            <person name="Miao Y.-G."/>
            <person name="Wang W.-Y."/>
            <person name="Chen R.-S."/>
            <person name="Shen Y."/>
            <person name="Chen Z."/>
            <person name="Yuan Z.-H."/>
            <person name="Zhao G.-P."/>
            <person name="Qu D."/>
            <person name="Danchin A."/>
            <person name="Wen Y.-M."/>
        </authorList>
    </citation>
    <scope>NUCLEOTIDE SEQUENCE [LARGE SCALE GENOMIC DNA]</scope>
    <source>
        <strain>ATCC 12228 / FDA PCI 1200</strain>
    </source>
</reference>
<organism>
    <name type="scientific">Staphylococcus epidermidis (strain ATCC 12228 / FDA PCI 1200)</name>
    <dbReference type="NCBI Taxonomy" id="176280"/>
    <lineage>
        <taxon>Bacteria</taxon>
        <taxon>Bacillati</taxon>
        <taxon>Bacillota</taxon>
        <taxon>Bacilli</taxon>
        <taxon>Bacillales</taxon>
        <taxon>Staphylococcaceae</taxon>
        <taxon>Staphylococcus</taxon>
    </lineage>
</organism>
<gene>
    <name evidence="1" type="primary">hisH</name>
    <name type="ordered locus">SE_0274</name>
</gene>